<name>DNLJ_MYCLE</name>
<accession>O33102</accession>
<gene>
    <name evidence="1" type="primary">ligA</name>
    <name type="synonym">lig</name>
    <name type="ordered locus">ML1705</name>
    <name type="ORF">MLCB637.10</name>
</gene>
<dbReference type="EC" id="6.5.1.2" evidence="1"/>
<dbReference type="EMBL" id="Z99263">
    <property type="protein sequence ID" value="CAB16425.1"/>
    <property type="molecule type" value="Genomic_DNA"/>
</dbReference>
<dbReference type="EMBL" id="AL583923">
    <property type="protein sequence ID" value="CAC30658.1"/>
    <property type="molecule type" value="Genomic_DNA"/>
</dbReference>
<dbReference type="PIR" id="T45403">
    <property type="entry name" value="T45403"/>
</dbReference>
<dbReference type="RefSeq" id="NP_302174.1">
    <property type="nucleotide sequence ID" value="NC_002677.1"/>
</dbReference>
<dbReference type="RefSeq" id="WP_010908495.1">
    <property type="nucleotide sequence ID" value="NC_002677.1"/>
</dbReference>
<dbReference type="SMR" id="O33102"/>
<dbReference type="STRING" id="272631.gene:17575550"/>
<dbReference type="KEGG" id="mle:ML1705"/>
<dbReference type="PATRIC" id="fig|272631.5.peg.3213"/>
<dbReference type="Leproma" id="ML1705"/>
<dbReference type="eggNOG" id="COG0272">
    <property type="taxonomic scope" value="Bacteria"/>
</dbReference>
<dbReference type="HOGENOM" id="CLU_007764_2_1_11"/>
<dbReference type="OrthoDB" id="9759736at2"/>
<dbReference type="Proteomes" id="UP000000806">
    <property type="component" value="Chromosome"/>
</dbReference>
<dbReference type="GO" id="GO:0005829">
    <property type="term" value="C:cytosol"/>
    <property type="evidence" value="ECO:0007669"/>
    <property type="project" value="TreeGrafter"/>
</dbReference>
<dbReference type="GO" id="GO:0003911">
    <property type="term" value="F:DNA ligase (NAD+) activity"/>
    <property type="evidence" value="ECO:0007669"/>
    <property type="project" value="UniProtKB-UniRule"/>
</dbReference>
<dbReference type="GO" id="GO:0046872">
    <property type="term" value="F:metal ion binding"/>
    <property type="evidence" value="ECO:0007669"/>
    <property type="project" value="UniProtKB-KW"/>
</dbReference>
<dbReference type="GO" id="GO:0006281">
    <property type="term" value="P:DNA repair"/>
    <property type="evidence" value="ECO:0007669"/>
    <property type="project" value="UniProtKB-KW"/>
</dbReference>
<dbReference type="GO" id="GO:0006260">
    <property type="term" value="P:DNA replication"/>
    <property type="evidence" value="ECO:0007669"/>
    <property type="project" value="UniProtKB-KW"/>
</dbReference>
<dbReference type="CDD" id="cd17748">
    <property type="entry name" value="BRCT_DNA_ligase_like"/>
    <property type="match status" value="1"/>
</dbReference>
<dbReference type="CDD" id="cd00114">
    <property type="entry name" value="LIGANc"/>
    <property type="match status" value="1"/>
</dbReference>
<dbReference type="FunFam" id="1.10.150.20:FF:000006">
    <property type="entry name" value="DNA ligase"/>
    <property type="match status" value="1"/>
</dbReference>
<dbReference type="FunFam" id="1.10.287.610:FF:000002">
    <property type="entry name" value="DNA ligase"/>
    <property type="match status" value="1"/>
</dbReference>
<dbReference type="FunFam" id="2.40.50.140:FF:000012">
    <property type="entry name" value="DNA ligase"/>
    <property type="match status" value="1"/>
</dbReference>
<dbReference type="FunFam" id="3.30.470.30:FF:000001">
    <property type="entry name" value="DNA ligase"/>
    <property type="match status" value="1"/>
</dbReference>
<dbReference type="FunFam" id="3.40.50.10190:FF:000054">
    <property type="entry name" value="DNA ligase"/>
    <property type="match status" value="1"/>
</dbReference>
<dbReference type="Gene3D" id="6.20.10.30">
    <property type="match status" value="1"/>
</dbReference>
<dbReference type="Gene3D" id="1.10.150.20">
    <property type="entry name" value="5' to 3' exonuclease, C-terminal subdomain"/>
    <property type="match status" value="2"/>
</dbReference>
<dbReference type="Gene3D" id="3.40.50.10190">
    <property type="entry name" value="BRCT domain"/>
    <property type="match status" value="1"/>
</dbReference>
<dbReference type="Gene3D" id="3.30.470.30">
    <property type="entry name" value="DNA ligase/mRNA capping enzyme"/>
    <property type="match status" value="1"/>
</dbReference>
<dbReference type="Gene3D" id="1.10.287.610">
    <property type="entry name" value="Helix hairpin bin"/>
    <property type="match status" value="1"/>
</dbReference>
<dbReference type="Gene3D" id="2.40.50.140">
    <property type="entry name" value="Nucleic acid-binding proteins"/>
    <property type="match status" value="1"/>
</dbReference>
<dbReference type="HAMAP" id="MF_01588">
    <property type="entry name" value="DNA_ligase_A"/>
    <property type="match status" value="1"/>
</dbReference>
<dbReference type="InterPro" id="IPR001357">
    <property type="entry name" value="BRCT_dom"/>
</dbReference>
<dbReference type="InterPro" id="IPR036420">
    <property type="entry name" value="BRCT_dom_sf"/>
</dbReference>
<dbReference type="InterPro" id="IPR041663">
    <property type="entry name" value="DisA/LigA_HHH"/>
</dbReference>
<dbReference type="InterPro" id="IPR001679">
    <property type="entry name" value="DNA_ligase"/>
</dbReference>
<dbReference type="InterPro" id="IPR018239">
    <property type="entry name" value="DNA_ligase_AS"/>
</dbReference>
<dbReference type="InterPro" id="IPR033136">
    <property type="entry name" value="DNA_ligase_CS"/>
</dbReference>
<dbReference type="InterPro" id="IPR013839">
    <property type="entry name" value="DNAligase_adenylation"/>
</dbReference>
<dbReference type="InterPro" id="IPR013840">
    <property type="entry name" value="DNAligase_N"/>
</dbReference>
<dbReference type="InterPro" id="IPR012340">
    <property type="entry name" value="NA-bd_OB-fold"/>
</dbReference>
<dbReference type="InterPro" id="IPR004150">
    <property type="entry name" value="NAD_DNA_ligase_OB"/>
</dbReference>
<dbReference type="InterPro" id="IPR010994">
    <property type="entry name" value="RuvA_2-like"/>
</dbReference>
<dbReference type="InterPro" id="IPR004149">
    <property type="entry name" value="Znf_DNAligase_C4"/>
</dbReference>
<dbReference type="NCBIfam" id="TIGR00575">
    <property type="entry name" value="dnlj"/>
    <property type="match status" value="1"/>
</dbReference>
<dbReference type="NCBIfam" id="NF005932">
    <property type="entry name" value="PRK07956.1"/>
    <property type="match status" value="1"/>
</dbReference>
<dbReference type="PANTHER" id="PTHR23389">
    <property type="entry name" value="CHROMOSOME TRANSMISSION FIDELITY FACTOR 18"/>
    <property type="match status" value="1"/>
</dbReference>
<dbReference type="PANTHER" id="PTHR23389:SF9">
    <property type="entry name" value="DNA LIGASE"/>
    <property type="match status" value="1"/>
</dbReference>
<dbReference type="Pfam" id="PF00533">
    <property type="entry name" value="BRCT"/>
    <property type="match status" value="1"/>
</dbReference>
<dbReference type="Pfam" id="PF01653">
    <property type="entry name" value="DNA_ligase_aden"/>
    <property type="match status" value="1"/>
</dbReference>
<dbReference type="Pfam" id="PF03120">
    <property type="entry name" value="DNA_ligase_OB"/>
    <property type="match status" value="1"/>
</dbReference>
<dbReference type="Pfam" id="PF03119">
    <property type="entry name" value="DNA_ligase_ZBD"/>
    <property type="match status" value="1"/>
</dbReference>
<dbReference type="Pfam" id="PF12826">
    <property type="entry name" value="HHH_2"/>
    <property type="match status" value="1"/>
</dbReference>
<dbReference type="Pfam" id="PF22745">
    <property type="entry name" value="Nlig-Ia"/>
    <property type="match status" value="1"/>
</dbReference>
<dbReference type="PIRSF" id="PIRSF001604">
    <property type="entry name" value="LigA"/>
    <property type="match status" value="1"/>
</dbReference>
<dbReference type="SMART" id="SM00292">
    <property type="entry name" value="BRCT"/>
    <property type="match status" value="1"/>
</dbReference>
<dbReference type="SMART" id="SM00532">
    <property type="entry name" value="LIGANc"/>
    <property type="match status" value="1"/>
</dbReference>
<dbReference type="SUPFAM" id="SSF52113">
    <property type="entry name" value="BRCT domain"/>
    <property type="match status" value="1"/>
</dbReference>
<dbReference type="SUPFAM" id="SSF56091">
    <property type="entry name" value="DNA ligase/mRNA capping enzyme, catalytic domain"/>
    <property type="match status" value="1"/>
</dbReference>
<dbReference type="SUPFAM" id="SSF50249">
    <property type="entry name" value="Nucleic acid-binding proteins"/>
    <property type="match status" value="1"/>
</dbReference>
<dbReference type="SUPFAM" id="SSF47781">
    <property type="entry name" value="RuvA domain 2-like"/>
    <property type="match status" value="1"/>
</dbReference>
<dbReference type="PROSITE" id="PS50172">
    <property type="entry name" value="BRCT"/>
    <property type="match status" value="1"/>
</dbReference>
<dbReference type="PROSITE" id="PS01055">
    <property type="entry name" value="DNA_LIGASE_N1"/>
    <property type="match status" value="1"/>
</dbReference>
<dbReference type="PROSITE" id="PS01056">
    <property type="entry name" value="DNA_LIGASE_N2"/>
    <property type="match status" value="1"/>
</dbReference>
<keyword id="KW-0227">DNA damage</keyword>
<keyword id="KW-0234">DNA repair</keyword>
<keyword id="KW-0235">DNA replication</keyword>
<keyword id="KW-0436">Ligase</keyword>
<keyword id="KW-0460">Magnesium</keyword>
<keyword id="KW-0464">Manganese</keyword>
<keyword id="KW-0479">Metal-binding</keyword>
<keyword id="KW-0520">NAD</keyword>
<keyword id="KW-1185">Reference proteome</keyword>
<keyword id="KW-0862">Zinc</keyword>
<comment type="function">
    <text evidence="1">DNA ligase that catalyzes the formation of phosphodiester linkages between 5'-phosphoryl and 3'-hydroxyl groups in double-stranded DNA using NAD as a coenzyme and as the energy source for the reaction. It is essential for DNA replication and repair of damaged DNA.</text>
</comment>
<comment type="catalytic activity">
    <reaction evidence="1">
        <text>NAD(+) + (deoxyribonucleotide)n-3'-hydroxyl + 5'-phospho-(deoxyribonucleotide)m = (deoxyribonucleotide)n+m + AMP + beta-nicotinamide D-nucleotide.</text>
        <dbReference type="EC" id="6.5.1.2"/>
    </reaction>
</comment>
<comment type="cofactor">
    <cofactor evidence="1">
        <name>Mg(2+)</name>
        <dbReference type="ChEBI" id="CHEBI:18420"/>
    </cofactor>
    <cofactor evidence="1">
        <name>Mn(2+)</name>
        <dbReference type="ChEBI" id="CHEBI:29035"/>
    </cofactor>
</comment>
<comment type="similarity">
    <text evidence="1">Belongs to the NAD-dependent DNA ligase family. LigA subfamily.</text>
</comment>
<reference key="1">
    <citation type="journal article" date="2001" name="Nature">
        <title>Massive gene decay in the leprosy bacillus.</title>
        <authorList>
            <person name="Cole S.T."/>
            <person name="Eiglmeier K."/>
            <person name="Parkhill J."/>
            <person name="James K.D."/>
            <person name="Thomson N.R."/>
            <person name="Wheeler P.R."/>
            <person name="Honore N."/>
            <person name="Garnier T."/>
            <person name="Churcher C.M."/>
            <person name="Harris D.E."/>
            <person name="Mungall K.L."/>
            <person name="Basham D."/>
            <person name="Brown D."/>
            <person name="Chillingworth T."/>
            <person name="Connor R."/>
            <person name="Davies R.M."/>
            <person name="Devlin K."/>
            <person name="Duthoy S."/>
            <person name="Feltwell T."/>
            <person name="Fraser A."/>
            <person name="Hamlin N."/>
            <person name="Holroyd S."/>
            <person name="Hornsby T."/>
            <person name="Jagels K."/>
            <person name="Lacroix C."/>
            <person name="Maclean J."/>
            <person name="Moule S."/>
            <person name="Murphy L.D."/>
            <person name="Oliver K."/>
            <person name="Quail M.A."/>
            <person name="Rajandream M.A."/>
            <person name="Rutherford K.M."/>
            <person name="Rutter S."/>
            <person name="Seeger K."/>
            <person name="Simon S."/>
            <person name="Simmonds M."/>
            <person name="Skelton J."/>
            <person name="Squares R."/>
            <person name="Squares S."/>
            <person name="Stevens K."/>
            <person name="Taylor K."/>
            <person name="Whitehead S."/>
            <person name="Woodward J.R."/>
            <person name="Barrell B.G."/>
        </authorList>
    </citation>
    <scope>NUCLEOTIDE SEQUENCE [LARGE SCALE GENOMIC DNA]</scope>
    <source>
        <strain>TN</strain>
    </source>
</reference>
<evidence type="ECO:0000255" key="1">
    <source>
        <dbReference type="HAMAP-Rule" id="MF_01588"/>
    </source>
</evidence>
<organism>
    <name type="scientific">Mycobacterium leprae (strain TN)</name>
    <dbReference type="NCBI Taxonomy" id="272631"/>
    <lineage>
        <taxon>Bacteria</taxon>
        <taxon>Bacillati</taxon>
        <taxon>Actinomycetota</taxon>
        <taxon>Actinomycetes</taxon>
        <taxon>Mycobacteriales</taxon>
        <taxon>Mycobacteriaceae</taxon>
        <taxon>Mycobacterium</taxon>
    </lineage>
</organism>
<sequence length="694" mass="75912">MSSPEADPIGPEVLQQWRKLTEEVREHQFRYYVRDAPIISDAEFDALLDRLTVLEEQHPELCTPDSPTQLVGGAGFMTDFVATEHLERMFSLDNAFSGDELNAWVTRIRAEIGNDAHYLCELKIDGVALSLVYRDGRLTRATTRGDGRTGEDVTLNARTIEDVPERLTVSDIYPLPEVLEVRGEVFFRVVDFQALNTSLVEEGKNPFANPRNSAAGSLRQKDPAVTAHRKLRMICHGLGHIEGFRPATQHQAYLALRDWGLPVSEHTTLVNDIAGVQGCIAYWAEHRHEVDHEIDGIVVKIDEVTLQRRLGSTSRAPRWAIAYKYLPEEAQTKLLDIRVNVGRTGRVTPFAFMTPVKVAGSTVGQATLHNPSEVKRKGVLIGDTVVIRKAGDVIPEVLGPVVDLRDGSEREFVMPTTCPECGTTLAPEKEGDADIRCPNARSCPGQLRERVFHVASRSALDIQGLGYEAGVALLAAQVITSEGDLFTLTEKALLRTELFRNKAGELSANGKRLLVNVDKAKTAPLWRVLVALSIRHVGPTAARALATEFGSVDAILAASPEQLAAVEGVGTTIAAAVTEWFTVDWHRVIVNKWRAAGVRMVDERDTSVLPTCEGLTIVVTGSLAGFSRDDAKEAIVARGGKVAGSVSKKIAYVVVGDLPGYKYDKAVELGVPILNEDGFRLLLEQGPPVQQVVD</sequence>
<feature type="chain" id="PRO_0000161751" description="DNA ligase">
    <location>
        <begin position="1"/>
        <end position="694"/>
    </location>
</feature>
<feature type="domain" description="BRCT" evidence="1">
    <location>
        <begin position="607"/>
        <end position="694"/>
    </location>
</feature>
<feature type="active site" description="N6-AMP-lysine intermediate" evidence="1">
    <location>
        <position position="123"/>
    </location>
</feature>
<feature type="binding site" evidence="1">
    <location>
        <begin position="41"/>
        <end position="45"/>
    </location>
    <ligand>
        <name>NAD(+)</name>
        <dbReference type="ChEBI" id="CHEBI:57540"/>
    </ligand>
</feature>
<feature type="binding site" evidence="1">
    <location>
        <begin position="91"/>
        <end position="92"/>
    </location>
    <ligand>
        <name>NAD(+)</name>
        <dbReference type="ChEBI" id="CHEBI:57540"/>
    </ligand>
</feature>
<feature type="binding site" evidence="1">
    <location>
        <position position="121"/>
    </location>
    <ligand>
        <name>NAD(+)</name>
        <dbReference type="ChEBI" id="CHEBI:57540"/>
    </ligand>
</feature>
<feature type="binding site" evidence="1">
    <location>
        <position position="144"/>
    </location>
    <ligand>
        <name>NAD(+)</name>
        <dbReference type="ChEBI" id="CHEBI:57540"/>
    </ligand>
</feature>
<feature type="binding site" evidence="1">
    <location>
        <position position="184"/>
    </location>
    <ligand>
        <name>NAD(+)</name>
        <dbReference type="ChEBI" id="CHEBI:57540"/>
    </ligand>
</feature>
<feature type="binding site" evidence="1">
    <location>
        <position position="300"/>
    </location>
    <ligand>
        <name>NAD(+)</name>
        <dbReference type="ChEBI" id="CHEBI:57540"/>
    </ligand>
</feature>
<feature type="binding site" evidence="1">
    <location>
        <position position="324"/>
    </location>
    <ligand>
        <name>NAD(+)</name>
        <dbReference type="ChEBI" id="CHEBI:57540"/>
    </ligand>
</feature>
<feature type="binding site" evidence="1">
    <location>
        <position position="418"/>
    </location>
    <ligand>
        <name>Zn(2+)</name>
        <dbReference type="ChEBI" id="CHEBI:29105"/>
    </ligand>
</feature>
<feature type="binding site" evidence="1">
    <location>
        <position position="421"/>
    </location>
    <ligand>
        <name>Zn(2+)</name>
        <dbReference type="ChEBI" id="CHEBI:29105"/>
    </ligand>
</feature>
<feature type="binding site" evidence="1">
    <location>
        <position position="437"/>
    </location>
    <ligand>
        <name>Zn(2+)</name>
        <dbReference type="ChEBI" id="CHEBI:29105"/>
    </ligand>
</feature>
<feature type="binding site" evidence="1">
    <location>
        <position position="443"/>
    </location>
    <ligand>
        <name>Zn(2+)</name>
        <dbReference type="ChEBI" id="CHEBI:29105"/>
    </ligand>
</feature>
<protein>
    <recommendedName>
        <fullName evidence="1">DNA ligase</fullName>
        <ecNumber evidence="1">6.5.1.2</ecNumber>
    </recommendedName>
    <alternativeName>
        <fullName evidence="1">Polydeoxyribonucleotide synthase [NAD(+)]</fullName>
    </alternativeName>
</protein>
<proteinExistence type="inferred from homology"/>